<feature type="chain" id="PRO_0000080711" description="DNA replication ATP-dependent helicase/nuclease DNA2">
    <location>
        <begin position="1"/>
        <end position="1522"/>
    </location>
</feature>
<feature type="region of interest" description="Disordered" evidence="2">
    <location>
        <begin position="1"/>
        <end position="29"/>
    </location>
</feature>
<feature type="region of interest" description="Disordered" evidence="2">
    <location>
        <begin position="77"/>
        <end position="119"/>
    </location>
</feature>
<feature type="region of interest" description="Disordered" evidence="2">
    <location>
        <begin position="140"/>
        <end position="160"/>
    </location>
</feature>
<feature type="region of interest" description="Disordered" evidence="2">
    <location>
        <begin position="239"/>
        <end position="270"/>
    </location>
</feature>
<feature type="region of interest" description="Disordered" evidence="2">
    <location>
        <begin position="283"/>
        <end position="330"/>
    </location>
</feature>
<feature type="region of interest" description="Nuclease activity">
    <location>
        <begin position="450"/>
        <end position="900"/>
    </location>
</feature>
<feature type="region of interest" description="Helicase activity">
    <location>
        <begin position="901"/>
        <end position="1522"/>
    </location>
</feature>
<feature type="compositionally biased region" description="Polar residues" evidence="2">
    <location>
        <begin position="91"/>
        <end position="100"/>
    </location>
</feature>
<feature type="compositionally biased region" description="Basic and acidic residues" evidence="2">
    <location>
        <begin position="102"/>
        <end position="116"/>
    </location>
</feature>
<feature type="compositionally biased region" description="Basic and acidic residues" evidence="2">
    <location>
        <begin position="243"/>
        <end position="260"/>
    </location>
</feature>
<feature type="compositionally biased region" description="Polar residues" evidence="2">
    <location>
        <begin position="287"/>
        <end position="308"/>
    </location>
</feature>
<feature type="compositionally biased region" description="Basic and acidic residues" evidence="2">
    <location>
        <begin position="309"/>
        <end position="323"/>
    </location>
</feature>
<feature type="binding site">
    <location>
        <position position="519"/>
    </location>
    <ligand>
        <name>[4Fe-4S] cluster</name>
        <dbReference type="ChEBI" id="CHEBI:49883"/>
    </ligand>
</feature>
<feature type="binding site">
    <location>
        <position position="768"/>
    </location>
    <ligand>
        <name>[4Fe-4S] cluster</name>
        <dbReference type="ChEBI" id="CHEBI:49883"/>
    </ligand>
</feature>
<feature type="binding site">
    <location>
        <position position="771"/>
    </location>
    <ligand>
        <name>[4Fe-4S] cluster</name>
        <dbReference type="ChEBI" id="CHEBI:49883"/>
    </ligand>
</feature>
<feature type="binding site">
    <location>
        <position position="777"/>
    </location>
    <ligand>
        <name>[4Fe-4S] cluster</name>
        <dbReference type="ChEBI" id="CHEBI:49883"/>
    </ligand>
</feature>
<feature type="binding site" evidence="1">
    <location>
        <begin position="1074"/>
        <end position="1081"/>
    </location>
    <ligand>
        <name>ATP</name>
        <dbReference type="ChEBI" id="CHEBI:30616"/>
    </ligand>
</feature>
<feature type="modified residue" description="Phosphothreonine" evidence="7">
    <location>
        <position position="4"/>
    </location>
</feature>
<feature type="modified residue" description="Phosphoserine; by CDK1" evidence="7">
    <location>
        <position position="17"/>
    </location>
</feature>
<feature type="modified residue" description="Phosphoserine; by CDK1" evidence="7">
    <location>
        <position position="237"/>
    </location>
</feature>
<feature type="modified residue" description="Phosphothreonine" evidence="11">
    <location>
        <position position="962"/>
    </location>
</feature>
<feature type="mutagenesis site" description="Abolishes phosphorylation by CDK1, leading to a poor recruitment at double-strand. break (DSB) sites following DNA damage; when associated with A-17 and A-237." evidence="7">
    <original>T</original>
    <variation>A</variation>
    <location>
        <position position="4"/>
    </location>
</feature>
<feature type="mutagenesis site" description="Abolishes phosphorylation by CDK1, leading to a poor recruitment at double-strand. break (DSB) sites following DNA damage; when associated with A-4 and A-237." evidence="7">
    <original>S</original>
    <variation>A</variation>
    <location>
        <position position="17"/>
    </location>
</feature>
<feature type="mutagenesis site" description="Mimics phosphorylation; restores nuclear localization and recruitment at double-strand. break (DSB) sites following DNA damage; when associated with D-237." evidence="7">
    <original>S</original>
    <variation>D</variation>
    <location>
        <position position="17"/>
    </location>
</feature>
<feature type="mutagenesis site" description="Abolishes phosphorylation by CDK1, leading to a poor recruitment at double-strand. break (DSB) sites following DNA damage; when associated with A-4 and A-17." evidence="7">
    <original>S</original>
    <variation>A</variation>
    <location>
        <position position="237"/>
    </location>
</feature>
<feature type="mutagenesis site" description="Mimics phosphorylation; restores nuclear localization and recruitment at double-strand. break (DSB) sites following DNA damage; when associated with D-17." evidence="7">
    <original>S</original>
    <variation>D</variation>
    <location>
        <position position="237"/>
    </location>
</feature>
<feature type="mutagenesis site" description="In dna2-1; temperature-sensitive mutant unable to grow at 37 degrees Celsius, probably due to abolition of iron-sulfur-binding." evidence="8">
    <original>P</original>
    <variation>S</variation>
    <location>
        <position position="504"/>
    </location>
</feature>
<feature type="mutagenesis site" description="Abolishes iron-sulfur-binding; when associated with A-768; A-771 and A-777. Impaired nuclease and ATPase activities; when associated with A-768." evidence="8">
    <original>C</original>
    <variation>A</variation>
    <location>
        <position position="519"/>
    </location>
</feature>
<feature type="mutagenesis site" description="Nuclease dead mutant. No helicase activity when the 5'-end of the substrate is blocked." evidence="6">
    <original>E</original>
    <variation>A</variation>
    <location>
        <position position="675"/>
    </location>
</feature>
<feature type="mutagenesis site" description="Nuclease dead mutant. No helicase activity when the 5'-end of the substrate is blocked." evidence="6">
    <original>K</original>
    <variation>R</variation>
    <location>
        <position position="677"/>
    </location>
</feature>
<feature type="mutagenesis site" description="Abolishes iron-sulfur-binding; when associated with A-519; A-771 and A-777. Impaired nuclease and ATPase activities; when associated with A-519." evidence="8">
    <original>C</original>
    <variation>A</variation>
    <location>
        <position position="768"/>
    </location>
</feature>
<feature type="mutagenesis site" description="Abolishes iron-sulfur-binding; when associated with A-519; A-768 and A-777. Impaired nuclease and ATPase activities; when associated with A-777." evidence="8">
    <original>C</original>
    <variation>A</variation>
    <location>
        <position position="771"/>
    </location>
</feature>
<feature type="mutagenesis site" description="Abolishes iron-sulfur-binding; when associated with A-519; A-768 and A-771. Impaired nuclease and ATPase activities; when associated with A-771." evidence="8">
    <original>C</original>
    <variation>A</variation>
    <location>
        <position position="777"/>
    </location>
</feature>
<feature type="helix" evidence="12">
    <location>
        <begin position="212"/>
        <end position="215"/>
    </location>
</feature>
<reference key="1">
    <citation type="journal article" date="1994" name="Science">
        <title>Complete nucleotide sequence of Saccharomyces cerevisiae chromosome VIII.</title>
        <authorList>
            <person name="Johnston M."/>
            <person name="Andrews S."/>
            <person name="Brinkman R."/>
            <person name="Cooper J."/>
            <person name="Ding H."/>
            <person name="Dover J."/>
            <person name="Du Z."/>
            <person name="Favello A."/>
            <person name="Fulton L."/>
            <person name="Gattung S."/>
            <person name="Geisel C."/>
            <person name="Kirsten J."/>
            <person name="Kucaba T."/>
            <person name="Hillier L.W."/>
            <person name="Jier M."/>
            <person name="Johnston L."/>
            <person name="Langston Y."/>
            <person name="Latreille P."/>
            <person name="Louis E.J."/>
            <person name="Macri C."/>
            <person name="Mardis E."/>
            <person name="Menezes S."/>
            <person name="Mouser L."/>
            <person name="Nhan M."/>
            <person name="Rifkin L."/>
            <person name="Riles L."/>
            <person name="St Peter H."/>
            <person name="Trevaskis E."/>
            <person name="Vaughan K."/>
            <person name="Vignati D."/>
            <person name="Wilcox L."/>
            <person name="Wohldman P."/>
            <person name="Waterston R."/>
            <person name="Wilson R."/>
            <person name="Vaudin M."/>
        </authorList>
    </citation>
    <scope>NUCLEOTIDE SEQUENCE [LARGE SCALE GENOMIC DNA]</scope>
    <source>
        <strain>ATCC 204508 / S288c</strain>
    </source>
</reference>
<reference key="2">
    <citation type="journal article" date="2014" name="G3 (Bethesda)">
        <title>The reference genome sequence of Saccharomyces cerevisiae: Then and now.</title>
        <authorList>
            <person name="Engel S.R."/>
            <person name="Dietrich F.S."/>
            <person name="Fisk D.G."/>
            <person name="Binkley G."/>
            <person name="Balakrishnan R."/>
            <person name="Costanzo M.C."/>
            <person name="Dwight S.S."/>
            <person name="Hitz B.C."/>
            <person name="Karra K."/>
            <person name="Nash R.S."/>
            <person name="Weng S."/>
            <person name="Wong E.D."/>
            <person name="Lloyd P."/>
            <person name="Skrzypek M.S."/>
            <person name="Miyasato S.R."/>
            <person name="Simison M."/>
            <person name="Cherry J.M."/>
        </authorList>
    </citation>
    <scope>GENOME REANNOTATION</scope>
    <source>
        <strain>ATCC 204508 / S288c</strain>
    </source>
</reference>
<reference key="3">
    <citation type="journal article" date="1995" name="Proc. Natl. Acad. Sci. U.S.A.">
        <title>A yeast gene required for DNA replication encodes a protein with homology to DNA helicases.</title>
        <authorList>
            <person name="Budd M.E."/>
            <person name="Campbell J.L."/>
        </authorList>
    </citation>
    <scope>CHARACTERIZATION</scope>
</reference>
<reference key="4">
    <citation type="journal article" date="1998" name="J. Biol. Chem.">
        <title>Dna2 of Saccharomyces cerevisiae possesses a single-stranded DNA-specific endonuclease activity that is able to act on double-stranded DNA in the presence of ATP.</title>
        <authorList>
            <person name="Bae S.H."/>
            <person name="Choi E."/>
            <person name="Lee K.H."/>
            <person name="Park J.S."/>
            <person name="Lee S.H."/>
            <person name="Seo Y.S."/>
        </authorList>
    </citation>
    <scope>FUNCTION</scope>
</reference>
<reference key="5">
    <citation type="journal article" date="2004" name="J. Biol. Chem.">
        <title>Dna2p helicase/nuclease is a tracking protein, like FEN1, for flap cleavage during Okazaki fragment maturation.</title>
        <authorList>
            <person name="Kao H.I."/>
            <person name="Campbell J.L."/>
            <person name="Bambara R.A."/>
        </authorList>
    </citation>
    <scope>FUNCTION</scope>
</reference>
<reference key="6">
    <citation type="journal article" date="2008" name="Cell">
        <title>Sgs1 helicase and two nucleases Dna2 and Exo1 resect DNA double-strand break ends.</title>
        <authorList>
            <person name="Zhu Z."/>
            <person name="Chung W.H."/>
            <person name="Shim E.Y."/>
            <person name="Lee S.E."/>
            <person name="Ira G."/>
        </authorList>
    </citation>
    <scope>FUNCTION</scope>
</reference>
<reference key="7">
    <citation type="journal article" date="2008" name="Mol. Cell. Proteomics">
        <title>A multidimensional chromatography technology for in-depth phosphoproteome analysis.</title>
        <authorList>
            <person name="Albuquerque C.P."/>
            <person name="Smolka M.B."/>
            <person name="Payne S.H."/>
            <person name="Bafna V."/>
            <person name="Eng J."/>
            <person name="Zhou H."/>
        </authorList>
    </citation>
    <scope>PHOSPHORYLATION [LARGE SCALE ANALYSIS] AT THR-962</scope>
    <scope>IDENTIFICATION BY MASS SPECTROMETRY [LARGE SCALE ANALYSIS]</scope>
</reference>
<reference key="8">
    <citation type="journal article" date="2010" name="J. Biol. Chem.">
        <title>Dna2 exhibits a unique strand end-dependent helicase function.</title>
        <authorList>
            <person name="Balakrishnan L."/>
            <person name="Polaczek P."/>
            <person name="Pokharel S."/>
            <person name="Campbell J.L."/>
            <person name="Bambara R.A."/>
        </authorList>
    </citation>
    <scope>FUNCTION</scope>
    <scope>MUTAGENESIS OF GLU-675 AND LYS-677</scope>
</reference>
<reference key="9">
    <citation type="journal article" date="2010" name="Nature">
        <title>DNA end resection by Dna2-Sgs1-RPA and its stimulation by Top3-Rmi1 and Mre11-Rad50-Xrs2.</title>
        <authorList>
            <person name="Cejka P."/>
            <person name="Cannavo E."/>
            <person name="Polaczek P."/>
            <person name="Masuda-Sasa T."/>
            <person name="Pokharel S."/>
            <person name="Campbell J.L."/>
            <person name="Kowalczykowski S.C."/>
        </authorList>
    </citation>
    <scope>FUNCTION</scope>
</reference>
<reference key="10">
    <citation type="journal article" date="2011" name="Nat. Struct. Mol. Biol.">
        <title>Cell cycle regulation of DNA double-strand break end resection by Cdk1-dependent Dna2 phosphorylation.</title>
        <authorList>
            <person name="Chen X."/>
            <person name="Niu H."/>
            <person name="Chung W.H."/>
            <person name="Zhu Z."/>
            <person name="Papusha A."/>
            <person name="Shim E.Y."/>
            <person name="Lee S.E."/>
            <person name="Sung P."/>
            <person name="Ira G."/>
        </authorList>
    </citation>
    <scope>FUNCTION</scope>
    <scope>PHOSPHORYLATION AT THR-4; SER-17 AND SER-237</scope>
    <scope>MUTAGENESIS OF THR-4; SER-17 AND SER-237</scope>
</reference>
<reference key="11">
    <citation type="journal article" date="2012" name="Nucleic Acids Res.">
        <title>Cross talk between the nuclease and helicase activities of Dna2: role of an essential iron-sulfur cluster domain.</title>
        <authorList>
            <person name="Pokharel S."/>
            <person name="Campbell J.L."/>
        </authorList>
    </citation>
    <scope>COFACTOR</scope>
    <scope>IRON-SULFUR-BINDING</scope>
    <scope>MUTAGENESIS OF PRO-504; CYS-519; CYS-768; CYS-771 AND CYS-777</scope>
</reference>
<accession>P38859</accession>
<accession>D3DLB3</accession>
<sequence>MPGTPQKNKRSASISVSPAKKTEEKEIIQNDSKAILSKQTKRKKKYAFAPINNLNGKNTKVSNASVLKSIAVSQVRNTSRTKDINKAVSKSVKQLPNSQVKPKREMSNLSRHHDFTQDEDGPMEEVIWKYSPLQRDMSDKTTSAAEYSDDYEDVQNPSSTPIVPNRLKTVLSFTNIQVPNADVNQLIQENGNEQVRPKPAEISTRESLRNIDDILDDIEGDLTIKPTITKFSDLPSSPIKAPNVEKKAEVNAEEVDKMDSTGDSNDGDDSLIDILTQKYVEKRKSESQITIQGNTNQKSGAQESCGKNDNTKSRGEIEDHENVDNQAKTGNAFYENEEDSNCQRIKKNEKIEYNSSDEFSDDSLIELLNETQTQVEPNTIEQDLDKVEKMVSDDLRIATDSTLSAYALRAKSGAPRDGVVRLVIVSLRSVELPKIGTQKILECIDGKGEQSSVVVRHPWVYLEFEVGDVIHIIEGKNIENKRLLSDDKNPKTQLANDNLLVLNPDVLFSATSVGSSVGCLRRSILQMQFQDPRGEPSLVMTLGNIVHELLQDSIKYKLSHNKISMEIIIQKLDSLLETYSFSIIICNEEIQYVKELVMKEHAENILYFVNKFVSKSNYGCYTSISGTRRTQPISISNVIDIEENIWSPIYGLKGFLDATVEANVENNKKHIVPLEVKTGKSRSVSYEVQGLIYTLLLNDRYEIPIEFFLLYFTRDKNMTKFPSVLHSIKHILMSRNRMSMNFKHQLQEVFGQAQSRFELPPLLRDSSCDSCFIKESCMVLNKLLEDGTPEESGLVEGEFEILTNHLSQNLANYKEFFTKYNDLITKEESSITCVNKELFLLDGSTRESRSGRCLSGLVVSEVVEHEKTEGAYIYCFSRRRNDNNSQSMLSSQIAANDFVIISDEEGHFCLCQGRVQFINPAKIGISVKRKLLNNRLLDKEKGVTTIQSVVESELEQSSLIATQNLVTYRIDKNDIQQSLSLARFNLLSLFLPAVSPGVDIVDERSKLCRKTKRSDGGNEILRSLLVDNRAPKFRDANDDPVIPYKLSKDTTLNLNQKEAIDKVMRAEDYALILGMPGTGKTTVIAEIIKILVSEGKRVLLTSYTHSAVDNILIKLRNTNISIMRLGMKHKVHPDTQKYVPNYASVKSYNDYLSKINSTSVVATTCLGINDILFTLNEKDFDYVILDEASQISMPVALGPLRYGNRFIMVGDHYQLPPLVKNDAARLGGLEESLFKTFCEKHPESVAELTLQYRMCGDIVTLSNFLIYDNKLKCGNNEVFAQSLELPMPEALSRYRNESANSKQWLEDILEPTRKVVFLNYDNCPDIIEQSEKDNITNHGEAELTLQCVEGMLLSGVPCEDIGVMTLYRAQLRLLKKIFNKNVYDGLEILTADQFQGRDKKCIIISMVRRNSQLNGGALLKELRRVNVAMTRAKSKLIIIGSKSTIGSVPEIKSFVNLLEERNWVYTMCKDALYKYKFPDRSNAIDEARKGCGKRTGAKPITSKSKFVSDKPIIKEILQEYES</sequence>
<organism>
    <name type="scientific">Saccharomyces cerevisiae (strain ATCC 204508 / S288c)</name>
    <name type="common">Baker's yeast</name>
    <dbReference type="NCBI Taxonomy" id="559292"/>
    <lineage>
        <taxon>Eukaryota</taxon>
        <taxon>Fungi</taxon>
        <taxon>Dikarya</taxon>
        <taxon>Ascomycota</taxon>
        <taxon>Saccharomycotina</taxon>
        <taxon>Saccharomycetes</taxon>
        <taxon>Saccharomycetales</taxon>
        <taxon>Saccharomycetaceae</taxon>
        <taxon>Saccharomyces</taxon>
    </lineage>
</organism>
<name>DNA2_YEAST</name>
<gene>
    <name type="primary">DNA2</name>
    <name type="ordered locus">YHR164C</name>
</gene>
<comment type="function">
    <text evidence="3 4 5 6 7 9">Key enzyme involved in DNA replication and DNA repair. Involved in Okazaki fragments processing by cleaving long flaps that escape FEN1: flaps that are longer than 27 nucleotides are coated by replication protein A complex (RPA), leading to recruit DNA2 which cleaves the flap until it is too short to bind RPA and becomes a substrate for FEN1. Also involved in 5'-end resection of DNA during double-strand break (DSB) repair by mediating the cleavage of 5'-ssDNA. Possesses different enzymatic activities, such as single-stranded DNA (ssDNA)-dependent ATPase, 5'-3' helicase and endonuclease activities. While the ATPase and endonuclease activities are well-defined and play a key role in Okazaki fragments processing and DSB repair, the 5'-3' DNA helicase activity is atypical: it cannot load onto its tracking strand internally and has an absolute free 5'-end requirement. Helicase activity may promote the motion of DNA2 on the flap, helping the nuclease function.</text>
</comment>
<comment type="catalytic activity">
    <reaction>
        <text>ATP + H2O = ADP + phosphate + H(+)</text>
        <dbReference type="Rhea" id="RHEA:13065"/>
        <dbReference type="ChEBI" id="CHEBI:15377"/>
        <dbReference type="ChEBI" id="CHEBI:15378"/>
        <dbReference type="ChEBI" id="CHEBI:30616"/>
        <dbReference type="ChEBI" id="CHEBI:43474"/>
        <dbReference type="ChEBI" id="CHEBI:456216"/>
        <dbReference type="EC" id="3.6.4.12"/>
    </reaction>
</comment>
<comment type="cofactor">
    <cofactor evidence="8">
        <name>[4Fe-4S] cluster</name>
        <dbReference type="ChEBI" id="CHEBI:49883"/>
    </cofactor>
    <text evidence="8">Binds 1 [4Fe-4S] cluster.</text>
</comment>
<comment type="interaction">
    <interactant intactId="EBI-5973">
        <id>P38859</id>
    </interactant>
    <interactant intactId="EBI-14693">
        <id>P26793</id>
        <label>RAD27</label>
    </interactant>
    <organismsDiffer>false</organismsDiffer>
    <experiments>3</experiments>
</comment>
<comment type="interaction">
    <interactant intactId="EBI-5973">
        <id>P38859</id>
    </interactant>
    <interactant intactId="EBI-14971">
        <id>P22336</id>
        <label>RFA1</label>
    </interactant>
    <organismsDiffer>false</organismsDiffer>
    <experiments>4</experiments>
</comment>
<comment type="subcellular location">
    <subcellularLocation>
        <location>Nucleus</location>
    </subcellularLocation>
    <subcellularLocation>
        <location>Chromosome</location>
    </subcellularLocation>
    <text>Recruited to double-strand. break (DSB) sites following phosphorylation at Ser-17 and Ser-237.</text>
</comment>
<comment type="PTM">
    <text evidence="7">Phosphorylated at Ser-17 and Ser-237 by CDK1 in response to DNA damage, leading to promote recruitment to double-strand break (DSB) sites and DNA resection.</text>
</comment>
<comment type="similarity">
    <text evidence="10">Belongs to the DNA2/NAM7 helicase family.</text>
</comment>
<dbReference type="EC" id="3.1.-.-"/>
<dbReference type="EC" id="3.6.4.12"/>
<dbReference type="EMBL" id="U00027">
    <property type="protein sequence ID" value="AAB68010.1"/>
    <property type="molecule type" value="Genomic_DNA"/>
</dbReference>
<dbReference type="EMBL" id="BK006934">
    <property type="protein sequence ID" value="DAA06857.1"/>
    <property type="molecule type" value="Genomic_DNA"/>
</dbReference>
<dbReference type="PIR" id="S48904">
    <property type="entry name" value="S48904"/>
</dbReference>
<dbReference type="RefSeq" id="NP_012034.1">
    <property type="nucleotide sequence ID" value="NM_001179295.1"/>
</dbReference>
<dbReference type="PDB" id="5HOG">
    <property type="method" value="X-ray"/>
    <property type="resolution" value="3.09 A"/>
    <property type="chains" value="D/E=207-223"/>
</dbReference>
<dbReference type="PDBsum" id="5HOG"/>
<dbReference type="SMR" id="P38859"/>
<dbReference type="BioGRID" id="36598">
    <property type="interactions" value="577"/>
</dbReference>
<dbReference type="DIP" id="DIP-2324N"/>
<dbReference type="FunCoup" id="P38859">
    <property type="interactions" value="713"/>
</dbReference>
<dbReference type="IntAct" id="P38859">
    <property type="interactions" value="14"/>
</dbReference>
<dbReference type="MINT" id="P38859"/>
<dbReference type="STRING" id="4932.YHR164C"/>
<dbReference type="iPTMnet" id="P38859"/>
<dbReference type="PaxDb" id="4932-YHR164C"/>
<dbReference type="PeptideAtlas" id="P38859"/>
<dbReference type="TopDownProteomics" id="P38859"/>
<dbReference type="EnsemblFungi" id="YHR164C_mRNA">
    <property type="protein sequence ID" value="YHR164C"/>
    <property type="gene ID" value="YHR164C"/>
</dbReference>
<dbReference type="GeneID" id="856569"/>
<dbReference type="KEGG" id="sce:YHR164C"/>
<dbReference type="AGR" id="SGD:S000001207"/>
<dbReference type="SGD" id="S000001207">
    <property type="gene designation" value="DNA2"/>
</dbReference>
<dbReference type="VEuPathDB" id="FungiDB:YHR164C"/>
<dbReference type="eggNOG" id="KOG1805">
    <property type="taxonomic scope" value="Eukaryota"/>
</dbReference>
<dbReference type="GeneTree" id="ENSGT00940000165719"/>
<dbReference type="HOGENOM" id="CLU_001666_2_1_1"/>
<dbReference type="InParanoid" id="P38859"/>
<dbReference type="OMA" id="NYCEAAI"/>
<dbReference type="OrthoDB" id="6513042at2759"/>
<dbReference type="BioCyc" id="YEAST:G3O-31198-MONOMER"/>
<dbReference type="Reactome" id="R-SCE-69166">
    <property type="pathway name" value="Removal of the Flap Intermediate"/>
</dbReference>
<dbReference type="BioGRID-ORCS" id="856569">
    <property type="hits" value="3 hits in 10 CRISPR screens"/>
</dbReference>
<dbReference type="PRO" id="PR:P38859"/>
<dbReference type="Proteomes" id="UP000002311">
    <property type="component" value="Chromosome VIII"/>
</dbReference>
<dbReference type="RNAct" id="P38859">
    <property type="molecule type" value="protein"/>
</dbReference>
<dbReference type="GO" id="GO:0000781">
    <property type="term" value="C:chromosome, telomeric region"/>
    <property type="evidence" value="ECO:0000314"/>
    <property type="project" value="SGD"/>
</dbReference>
<dbReference type="GO" id="GO:0005737">
    <property type="term" value="C:cytoplasm"/>
    <property type="evidence" value="ECO:0000314"/>
    <property type="project" value="SGD"/>
</dbReference>
<dbReference type="GO" id="GO:0005829">
    <property type="term" value="C:cytosol"/>
    <property type="evidence" value="ECO:0000304"/>
    <property type="project" value="Reactome"/>
</dbReference>
<dbReference type="GO" id="GO:0005634">
    <property type="term" value="C:nucleus"/>
    <property type="evidence" value="ECO:0000314"/>
    <property type="project" value="UniProtKB"/>
</dbReference>
<dbReference type="GO" id="GO:0035861">
    <property type="term" value="C:site of double-strand break"/>
    <property type="evidence" value="ECO:0000314"/>
    <property type="project" value="UniProtKB"/>
</dbReference>
<dbReference type="GO" id="GO:0051539">
    <property type="term" value="F:4 iron, 4 sulfur cluster binding"/>
    <property type="evidence" value="ECO:0000314"/>
    <property type="project" value="UniProtKB"/>
</dbReference>
<dbReference type="GO" id="GO:0043139">
    <property type="term" value="F:5'-3' DNA helicase activity"/>
    <property type="evidence" value="ECO:0000314"/>
    <property type="project" value="UniProtKB"/>
</dbReference>
<dbReference type="GO" id="GO:0017108">
    <property type="term" value="F:5'-flap endonuclease activity"/>
    <property type="evidence" value="ECO:0000314"/>
    <property type="project" value="SGD"/>
</dbReference>
<dbReference type="GO" id="GO:0005524">
    <property type="term" value="F:ATP binding"/>
    <property type="evidence" value="ECO:0007669"/>
    <property type="project" value="UniProtKB-KW"/>
</dbReference>
<dbReference type="GO" id="GO:0016887">
    <property type="term" value="F:ATP hydrolysis activity"/>
    <property type="evidence" value="ECO:0007669"/>
    <property type="project" value="RHEA"/>
</dbReference>
<dbReference type="GO" id="GO:0032448">
    <property type="term" value="F:DNA hairpin binding"/>
    <property type="evidence" value="ECO:0000314"/>
    <property type="project" value="SGD"/>
</dbReference>
<dbReference type="GO" id="GO:0003678">
    <property type="term" value="F:DNA helicase activity"/>
    <property type="evidence" value="ECO:0000314"/>
    <property type="project" value="SGD"/>
</dbReference>
<dbReference type="GO" id="GO:0000400">
    <property type="term" value="F:four-way junction DNA binding"/>
    <property type="evidence" value="ECO:0000314"/>
    <property type="project" value="SGD"/>
</dbReference>
<dbReference type="GO" id="GO:0046872">
    <property type="term" value="F:metal ion binding"/>
    <property type="evidence" value="ECO:0007669"/>
    <property type="project" value="UniProtKB-KW"/>
</dbReference>
<dbReference type="GO" id="GO:0004518">
    <property type="term" value="F:nuclease activity"/>
    <property type="evidence" value="ECO:0000314"/>
    <property type="project" value="UniProtKB"/>
</dbReference>
<dbReference type="GO" id="GO:0043539">
    <property type="term" value="F:protein serine/threonine kinase activator activity"/>
    <property type="evidence" value="ECO:0000314"/>
    <property type="project" value="SGD"/>
</dbReference>
<dbReference type="GO" id="GO:0003723">
    <property type="term" value="F:RNA binding"/>
    <property type="evidence" value="ECO:0000318"/>
    <property type="project" value="GO_Central"/>
</dbReference>
<dbReference type="GO" id="GO:0000014">
    <property type="term" value="F:single-stranded DNA endodeoxyribonuclease activity"/>
    <property type="evidence" value="ECO:0000314"/>
    <property type="project" value="SGD"/>
</dbReference>
<dbReference type="GO" id="GO:0017116">
    <property type="term" value="F:single-stranded DNA helicase activity"/>
    <property type="evidence" value="ECO:0000314"/>
    <property type="project" value="UniProtKB"/>
</dbReference>
<dbReference type="GO" id="GO:0006974">
    <property type="term" value="P:DNA damage response"/>
    <property type="evidence" value="ECO:0000314"/>
    <property type="project" value="UniProtKB"/>
</dbReference>
<dbReference type="GO" id="GO:0000729">
    <property type="term" value="P:DNA double-strand break processing"/>
    <property type="evidence" value="ECO:0000315"/>
    <property type="project" value="UniProtKB"/>
</dbReference>
<dbReference type="GO" id="GO:0006281">
    <property type="term" value="P:DNA repair"/>
    <property type="evidence" value="ECO:0000315"/>
    <property type="project" value="SGD"/>
</dbReference>
<dbReference type="GO" id="GO:0006261">
    <property type="term" value="P:DNA-templated DNA replication"/>
    <property type="evidence" value="ECO:0000314"/>
    <property type="project" value="SGD"/>
</dbReference>
<dbReference type="GO" id="GO:0006273">
    <property type="term" value="P:lagging strand elongation"/>
    <property type="evidence" value="ECO:0000315"/>
    <property type="project" value="SGD"/>
</dbReference>
<dbReference type="GO" id="GO:0000706">
    <property type="term" value="P:meiotic DNA double-strand break processing"/>
    <property type="evidence" value="ECO:0000316"/>
    <property type="project" value="SGD"/>
</dbReference>
<dbReference type="GO" id="GO:0033314">
    <property type="term" value="P:mitotic DNA replication checkpoint signaling"/>
    <property type="evidence" value="ECO:0000316"/>
    <property type="project" value="SGD"/>
</dbReference>
<dbReference type="GO" id="GO:0071932">
    <property type="term" value="P:replication fork reversal"/>
    <property type="evidence" value="ECO:0000318"/>
    <property type="project" value="GO_Central"/>
</dbReference>
<dbReference type="GO" id="GO:0000723">
    <property type="term" value="P:telomere maintenance"/>
    <property type="evidence" value="ECO:0000315"/>
    <property type="project" value="SGD"/>
</dbReference>
<dbReference type="CDD" id="cd18041">
    <property type="entry name" value="DEXXQc_DNA2"/>
    <property type="match status" value="1"/>
</dbReference>
<dbReference type="CDD" id="cd18808">
    <property type="entry name" value="SF1_C_Upf1"/>
    <property type="match status" value="1"/>
</dbReference>
<dbReference type="FunFam" id="3.40.50.300:FF:000721">
    <property type="entry name" value="DNA replication ATP-dependent helicase/nuclease DNA2"/>
    <property type="match status" value="1"/>
</dbReference>
<dbReference type="FunFam" id="3.40.50.300:FF:001490">
    <property type="entry name" value="DNA replication helicase"/>
    <property type="match status" value="1"/>
</dbReference>
<dbReference type="FunFam" id="3.40.50.300:FF:001889">
    <property type="entry name" value="DNA replication helicase/nuclease 2"/>
    <property type="match status" value="1"/>
</dbReference>
<dbReference type="Gene3D" id="3.90.320.10">
    <property type="match status" value="1"/>
</dbReference>
<dbReference type="Gene3D" id="3.40.50.300">
    <property type="entry name" value="P-loop containing nucleotide triphosphate hydrolases"/>
    <property type="match status" value="3"/>
</dbReference>
<dbReference type="InterPro" id="IPR050534">
    <property type="entry name" value="Coronavir_polyprotein_1ab"/>
</dbReference>
<dbReference type="InterPro" id="IPR026851">
    <property type="entry name" value="Dna2/JHS1_DEXXQ-box"/>
</dbReference>
<dbReference type="InterPro" id="IPR041679">
    <property type="entry name" value="DNA2/NAM7-like_C"/>
</dbReference>
<dbReference type="InterPro" id="IPR041677">
    <property type="entry name" value="DNA2/NAM7_AAA_11"/>
</dbReference>
<dbReference type="InterPro" id="IPR014808">
    <property type="entry name" value="DNA_replication_fac_Dna2_N"/>
</dbReference>
<dbReference type="InterPro" id="IPR027417">
    <property type="entry name" value="P-loop_NTPase"/>
</dbReference>
<dbReference type="InterPro" id="IPR011604">
    <property type="entry name" value="PDDEXK-like_dom_sf"/>
</dbReference>
<dbReference type="InterPro" id="IPR047187">
    <property type="entry name" value="SF1_C_Upf1"/>
</dbReference>
<dbReference type="PANTHER" id="PTHR43788:SF8">
    <property type="entry name" value="DNA-BINDING PROTEIN SMUBP-2"/>
    <property type="match status" value="1"/>
</dbReference>
<dbReference type="PANTHER" id="PTHR43788">
    <property type="entry name" value="DNA2/NAM7 HELICASE FAMILY MEMBER"/>
    <property type="match status" value="1"/>
</dbReference>
<dbReference type="Pfam" id="PF13086">
    <property type="entry name" value="AAA_11"/>
    <property type="match status" value="2"/>
</dbReference>
<dbReference type="Pfam" id="PF13087">
    <property type="entry name" value="AAA_12"/>
    <property type="match status" value="1"/>
</dbReference>
<dbReference type="Pfam" id="PF08696">
    <property type="entry name" value="Dna2"/>
    <property type="match status" value="1"/>
</dbReference>
<dbReference type="SUPFAM" id="SSF52540">
    <property type="entry name" value="P-loop containing nucleoside triphosphate hydrolases"/>
    <property type="match status" value="1"/>
</dbReference>
<proteinExistence type="evidence at protein level"/>
<protein>
    <recommendedName>
        <fullName>DNA replication ATP-dependent helicase/nuclease DNA2</fullName>
    </recommendedName>
    <domain>
        <recommendedName>
            <fullName>DNA replication nuclease DNA2</fullName>
            <ecNumber>3.1.-.-</ecNumber>
        </recommendedName>
    </domain>
    <domain>
        <recommendedName>
            <fullName>DNA replication ATP-dependent helicase DNA2</fullName>
            <ecNumber>3.6.4.12</ecNumber>
        </recommendedName>
    </domain>
</protein>
<evidence type="ECO:0000250" key="1"/>
<evidence type="ECO:0000256" key="2">
    <source>
        <dbReference type="SAM" id="MobiDB-lite"/>
    </source>
</evidence>
<evidence type="ECO:0000269" key="3">
    <source>
    </source>
</evidence>
<evidence type="ECO:0000269" key="4">
    <source>
    </source>
</evidence>
<evidence type="ECO:0000269" key="5">
    <source>
    </source>
</evidence>
<evidence type="ECO:0000269" key="6">
    <source>
    </source>
</evidence>
<evidence type="ECO:0000269" key="7">
    <source>
    </source>
</evidence>
<evidence type="ECO:0000269" key="8">
    <source>
    </source>
</evidence>
<evidence type="ECO:0000269" key="9">
    <source>
    </source>
</evidence>
<evidence type="ECO:0000305" key="10"/>
<evidence type="ECO:0007744" key="11">
    <source>
    </source>
</evidence>
<evidence type="ECO:0007829" key="12">
    <source>
        <dbReference type="PDB" id="5HOG"/>
    </source>
</evidence>
<keyword id="KW-0002">3D-structure</keyword>
<keyword id="KW-0004">4Fe-4S</keyword>
<keyword id="KW-0067">ATP-binding</keyword>
<keyword id="KW-0158">Chromosome</keyword>
<keyword id="KW-0227">DNA damage</keyword>
<keyword id="KW-0234">DNA repair</keyword>
<keyword id="KW-0235">DNA replication</keyword>
<keyword id="KW-0238">DNA-binding</keyword>
<keyword id="KW-0347">Helicase</keyword>
<keyword id="KW-0378">Hydrolase</keyword>
<keyword id="KW-0408">Iron</keyword>
<keyword id="KW-0411">Iron-sulfur</keyword>
<keyword id="KW-0479">Metal-binding</keyword>
<keyword id="KW-0511">Multifunctional enzyme</keyword>
<keyword id="KW-0540">Nuclease</keyword>
<keyword id="KW-0547">Nucleotide-binding</keyword>
<keyword id="KW-0539">Nucleus</keyword>
<keyword id="KW-0597">Phosphoprotein</keyword>
<keyword id="KW-1185">Reference proteome</keyword>